<accession>Q29TV8</accession>
<gene>
    <name type="primary">Gkn2</name>
    <name type="synonym">Blot</name>
</gene>
<keyword id="KW-1015">Disulfide bond</keyword>
<keyword id="KW-1185">Reference proteome</keyword>
<keyword id="KW-0964">Secreted</keyword>
<keyword id="KW-0732">Signal</keyword>
<reference key="1">
    <citation type="journal article" date="2006" name="Proteomics">
        <title>Identification of blottin: a novel gastric trefoil factor family-2 binding protein.</title>
        <authorList>
            <person name="Otto W.R."/>
            <person name="Patel K."/>
            <person name="McKinnell I."/>
            <person name="Evans M.D."/>
            <person name="Lee C.-Y."/>
            <person name="Frith D."/>
            <person name="Hanrahan S."/>
            <person name="Blight K."/>
            <person name="Blin N."/>
            <person name="Kayademir T."/>
            <person name="Poulsom R."/>
            <person name="Jeffery R."/>
            <person name="Hunt T."/>
            <person name="Wright N.A."/>
            <person name="McGregor F."/>
            <person name="Oien K.A."/>
        </authorList>
    </citation>
    <scope>NUCLEOTIDE SEQUENCE [MRNA]</scope>
    <source>
        <strain>Sprague-Dawley</strain>
    </source>
</reference>
<comment type="subunit">
    <text evidence="1">Heterodimer with TFF1; disulfide linked. Interacts with TFF2 (By similarity).</text>
</comment>
<comment type="subcellular location">
    <subcellularLocation>
        <location>Secreted</location>
    </subcellularLocation>
</comment>
<organism>
    <name type="scientific">Rattus norvegicus</name>
    <name type="common">Rat</name>
    <dbReference type="NCBI Taxonomy" id="10116"/>
    <lineage>
        <taxon>Eukaryota</taxon>
        <taxon>Metazoa</taxon>
        <taxon>Chordata</taxon>
        <taxon>Craniata</taxon>
        <taxon>Vertebrata</taxon>
        <taxon>Euteleostomi</taxon>
        <taxon>Mammalia</taxon>
        <taxon>Eutheria</taxon>
        <taxon>Euarchontoglires</taxon>
        <taxon>Glires</taxon>
        <taxon>Rodentia</taxon>
        <taxon>Myomorpha</taxon>
        <taxon>Muroidea</taxon>
        <taxon>Muridae</taxon>
        <taxon>Murinae</taxon>
        <taxon>Rattus</taxon>
    </lineage>
</organism>
<name>GKN2_RAT</name>
<feature type="signal peptide" evidence="2">
    <location>
        <begin position="1"/>
        <end position="20"/>
    </location>
</feature>
<feature type="chain" id="PRO_0000252131" description="Gastrokine-2">
    <location>
        <begin position="21"/>
        <end position="184"/>
    </location>
</feature>
<feature type="domain" description="BRICHOS" evidence="3">
    <location>
        <begin position="54"/>
        <end position="151"/>
    </location>
</feature>
<feature type="disulfide bond" evidence="1">
    <location>
        <begin position="81"/>
        <end position="143"/>
    </location>
</feature>
<sequence>MKSLVAFLVVLSILRIQSQAKEVFNIFVPGNNGGNVQETVTIDNQENTATINIHSGSCSSTTIFDYKHGYIASRVLSRRACYIIKMDHKAIPALDKLQRFLYEKQTMNAMASTEYTWVKYNPLKSLITKVDWFLFGSPIEQLCKHIPLYEGEVATKPREVGTGGCAKVGILGILGISICGGIHL</sequence>
<protein>
    <recommendedName>
        <fullName>Gastrokine-2</fullName>
    </recommendedName>
    <alternativeName>
        <fullName>Blottin</fullName>
    </alternativeName>
</protein>
<evidence type="ECO:0000250" key="1"/>
<evidence type="ECO:0000255" key="2"/>
<evidence type="ECO:0000255" key="3">
    <source>
        <dbReference type="PROSITE-ProRule" id="PRU00255"/>
    </source>
</evidence>
<dbReference type="EMBL" id="AY943907">
    <property type="protein sequence ID" value="AAY24520.1"/>
    <property type="molecule type" value="mRNA"/>
</dbReference>
<dbReference type="RefSeq" id="NP_001034775.1">
    <property type="nucleotide sequence ID" value="NM_001039686.2"/>
</dbReference>
<dbReference type="RefSeq" id="XP_038963294.1">
    <property type="nucleotide sequence ID" value="XM_039107366.1"/>
</dbReference>
<dbReference type="SMR" id="Q29TV8"/>
<dbReference type="FunCoup" id="Q29TV8">
    <property type="interactions" value="2"/>
</dbReference>
<dbReference type="STRING" id="10116.ENSRNOP00000063736"/>
<dbReference type="iPTMnet" id="Q29TV8"/>
<dbReference type="PhosphoSitePlus" id="Q29TV8"/>
<dbReference type="PaxDb" id="10116-ENSRNOP00000063736"/>
<dbReference type="Ensembl" id="ENSRNOT00000067651.3">
    <property type="protein sequence ID" value="ENSRNOP00000063736.1"/>
    <property type="gene ID" value="ENSRNOG00000009256.7"/>
</dbReference>
<dbReference type="GeneID" id="297419"/>
<dbReference type="KEGG" id="rno:297419"/>
<dbReference type="UCSC" id="RGD:1311934">
    <property type="organism name" value="rat"/>
</dbReference>
<dbReference type="AGR" id="RGD:1311934"/>
<dbReference type="CTD" id="200504"/>
<dbReference type="RGD" id="1311934">
    <property type="gene designation" value="Gkn2"/>
</dbReference>
<dbReference type="eggNOG" id="ENOG502SNS6">
    <property type="taxonomic scope" value="Eukaryota"/>
</dbReference>
<dbReference type="GeneTree" id="ENSGT00930000150969"/>
<dbReference type="HOGENOM" id="CLU_098684_2_0_1"/>
<dbReference type="InParanoid" id="Q29TV8"/>
<dbReference type="OMA" id="YILKMNH"/>
<dbReference type="OrthoDB" id="5977941at2759"/>
<dbReference type="PhylomeDB" id="Q29TV8"/>
<dbReference type="TreeFam" id="TF335950"/>
<dbReference type="PRO" id="PR:Q29TV8"/>
<dbReference type="Proteomes" id="UP000002494">
    <property type="component" value="Chromosome 4"/>
</dbReference>
<dbReference type="Bgee" id="ENSRNOG00000009256">
    <property type="expression patterns" value="Expressed in stomach and 16 other cell types or tissues"/>
</dbReference>
<dbReference type="GO" id="GO:0045178">
    <property type="term" value="C:basal part of cell"/>
    <property type="evidence" value="ECO:0000266"/>
    <property type="project" value="RGD"/>
</dbReference>
<dbReference type="GO" id="GO:0005615">
    <property type="term" value="C:extracellular space"/>
    <property type="evidence" value="ECO:0000318"/>
    <property type="project" value="GO_Central"/>
</dbReference>
<dbReference type="GO" id="GO:0010467">
    <property type="term" value="P:gene expression"/>
    <property type="evidence" value="ECO:0000266"/>
    <property type="project" value="RGD"/>
</dbReference>
<dbReference type="GO" id="GO:0006954">
    <property type="term" value="P:inflammatory response"/>
    <property type="evidence" value="ECO:0000266"/>
    <property type="project" value="RGD"/>
</dbReference>
<dbReference type="GO" id="GO:0002283">
    <property type="term" value="P:neutrophil activation involved in immune response"/>
    <property type="evidence" value="ECO:0000266"/>
    <property type="project" value="RGD"/>
</dbReference>
<dbReference type="GO" id="GO:0044546">
    <property type="term" value="P:NLRP3 inflammasome complex assembly"/>
    <property type="evidence" value="ECO:0000266"/>
    <property type="project" value="RGD"/>
</dbReference>
<dbReference type="GO" id="GO:0042127">
    <property type="term" value="P:regulation of cell population proliferation"/>
    <property type="evidence" value="ECO:0000318"/>
    <property type="project" value="GO_Central"/>
</dbReference>
<dbReference type="GO" id="GO:0009617">
    <property type="term" value="P:response to bacterium"/>
    <property type="evidence" value="ECO:0000266"/>
    <property type="project" value="RGD"/>
</dbReference>
<dbReference type="GO" id="GO:0051414">
    <property type="term" value="P:response to cortisol"/>
    <property type="evidence" value="ECO:0000266"/>
    <property type="project" value="RGD"/>
</dbReference>
<dbReference type="GO" id="GO:0006950">
    <property type="term" value="P:response to stress"/>
    <property type="evidence" value="ECO:0000266"/>
    <property type="project" value="RGD"/>
</dbReference>
<dbReference type="GO" id="GO:0009611">
    <property type="term" value="P:response to wounding"/>
    <property type="evidence" value="ECO:0000266"/>
    <property type="project" value="RGD"/>
</dbReference>
<dbReference type="FunFam" id="3.30.390.150:FF:000004">
    <property type="entry name" value="Gastrokine 2"/>
    <property type="match status" value="1"/>
</dbReference>
<dbReference type="Gene3D" id="3.30.390.150">
    <property type="match status" value="1"/>
</dbReference>
<dbReference type="InterPro" id="IPR007084">
    <property type="entry name" value="BRICHOS_dom"/>
</dbReference>
<dbReference type="InterPro" id="IPR051772">
    <property type="entry name" value="Gastrokine"/>
</dbReference>
<dbReference type="PANTHER" id="PTHR16483">
    <property type="entry name" value="GASTROKINE 1"/>
    <property type="match status" value="1"/>
</dbReference>
<dbReference type="Pfam" id="PF04089">
    <property type="entry name" value="BRICHOS"/>
    <property type="match status" value="1"/>
</dbReference>
<dbReference type="SMART" id="SM01039">
    <property type="entry name" value="BRICHOS"/>
    <property type="match status" value="1"/>
</dbReference>
<dbReference type="PROSITE" id="PS50869">
    <property type="entry name" value="BRICHOS"/>
    <property type="match status" value="1"/>
</dbReference>
<proteinExistence type="evidence at transcript level"/>